<gene>
    <name evidence="1" type="primary">groES</name>
    <name evidence="1" type="synonym">groS</name>
</gene>
<accession>P25969</accession>
<accession>Q59772</accession>
<organism>
    <name type="scientific">Cereibacter sphaeroides</name>
    <name type="common">Rhodobacter sphaeroides</name>
    <dbReference type="NCBI Taxonomy" id="1063"/>
    <lineage>
        <taxon>Bacteria</taxon>
        <taxon>Pseudomonadati</taxon>
        <taxon>Pseudomonadota</taxon>
        <taxon>Alphaproteobacteria</taxon>
        <taxon>Rhodobacterales</taxon>
        <taxon>Paracoccaceae</taxon>
        <taxon>Cereibacter</taxon>
    </lineage>
</organism>
<evidence type="ECO:0000255" key="1">
    <source>
        <dbReference type="HAMAP-Rule" id="MF_00580"/>
    </source>
</evidence>
<evidence type="ECO:0000269" key="2">
    <source>
    </source>
</evidence>
<evidence type="ECO:0000305" key="3"/>
<comment type="function">
    <text evidence="1">Together with the chaperonin GroEL, plays an essential role in assisting protein folding. The GroEL-GroES system forms a nano-cage that allows encapsulation of the non-native substrate proteins and provides a physical environment optimized to promote and accelerate protein folding. GroES binds to the apical surface of the GroEL ring, thereby capping the opening of the GroEL channel.</text>
</comment>
<comment type="subunit">
    <text evidence="1">Heptamer of 7 subunits arranged in a ring. Interacts with the chaperonin GroEL.</text>
</comment>
<comment type="subcellular location">
    <subcellularLocation>
        <location evidence="1">Cytoplasm</location>
    </subcellularLocation>
</comment>
<comment type="induction">
    <text>By heat shock.</text>
</comment>
<comment type="similarity">
    <text evidence="1 3">Belongs to the GroES chaperonin family.</text>
</comment>
<keyword id="KW-0143">Chaperone</keyword>
<keyword id="KW-0963">Cytoplasm</keyword>
<keyword id="KW-0903">Direct protein sequencing</keyword>
<keyword id="KW-0346">Stress response</keyword>
<proteinExistence type="evidence at protein level"/>
<name>CH10_CERSP</name>
<protein>
    <recommendedName>
        <fullName evidence="1">Co-chaperonin GroES</fullName>
    </recommendedName>
    <alternativeName>
        <fullName evidence="1">10 kDa chaperonin</fullName>
    </alternativeName>
    <alternativeName>
        <fullName evidence="1">Chaperonin-10</fullName>
        <shortName evidence="1">Cpn10</shortName>
    </alternativeName>
</protein>
<reference key="1">
    <citation type="journal article" date="1997" name="J. Bacteriol.">
        <title>Cloning and characterization of two groESL operons of Rhodobacter sphaeroides: transcriptional regulation of the heat-induced groESL operon.</title>
        <authorList>
            <person name="Lee W.T."/>
            <person name="Terlesky K.C."/>
            <person name="Tabita F.R."/>
        </authorList>
    </citation>
    <scope>NUCLEOTIDE SEQUENCE [GENOMIC DNA]</scope>
    <source>
        <strain>HR</strain>
    </source>
</reference>
<reference key="2">
    <citation type="journal article" date="1991" name="Biochemistry">
        <title>Purification and characterization of the chaperonin 10 and chaperonin 60 proteins from Rhodobacter sphaeroides.</title>
        <authorList>
            <person name="Terlesky K.C."/>
            <person name="Tabita F.R."/>
        </authorList>
    </citation>
    <scope>PROTEIN SEQUENCE OF 2-23</scope>
</reference>
<dbReference type="EMBL" id="U37369">
    <property type="protein sequence ID" value="AAB41335.1"/>
    <property type="molecule type" value="Genomic_DNA"/>
</dbReference>
<dbReference type="RefSeq" id="WP_002719473.1">
    <property type="nucleotide sequence ID" value="NZ_WTFI01000014.1"/>
</dbReference>
<dbReference type="SMR" id="P25969"/>
<dbReference type="OMA" id="KVFYRQW"/>
<dbReference type="GO" id="GO:0005737">
    <property type="term" value="C:cytoplasm"/>
    <property type="evidence" value="ECO:0007669"/>
    <property type="project" value="UniProtKB-SubCell"/>
</dbReference>
<dbReference type="GO" id="GO:0005524">
    <property type="term" value="F:ATP binding"/>
    <property type="evidence" value="ECO:0007669"/>
    <property type="project" value="InterPro"/>
</dbReference>
<dbReference type="GO" id="GO:0046872">
    <property type="term" value="F:metal ion binding"/>
    <property type="evidence" value="ECO:0007669"/>
    <property type="project" value="TreeGrafter"/>
</dbReference>
<dbReference type="GO" id="GO:0044183">
    <property type="term" value="F:protein folding chaperone"/>
    <property type="evidence" value="ECO:0007669"/>
    <property type="project" value="InterPro"/>
</dbReference>
<dbReference type="GO" id="GO:0051087">
    <property type="term" value="F:protein-folding chaperone binding"/>
    <property type="evidence" value="ECO:0007669"/>
    <property type="project" value="TreeGrafter"/>
</dbReference>
<dbReference type="GO" id="GO:0051082">
    <property type="term" value="F:unfolded protein binding"/>
    <property type="evidence" value="ECO:0007669"/>
    <property type="project" value="TreeGrafter"/>
</dbReference>
<dbReference type="GO" id="GO:0051085">
    <property type="term" value="P:chaperone cofactor-dependent protein refolding"/>
    <property type="evidence" value="ECO:0007669"/>
    <property type="project" value="TreeGrafter"/>
</dbReference>
<dbReference type="CDD" id="cd00320">
    <property type="entry name" value="cpn10"/>
    <property type="match status" value="1"/>
</dbReference>
<dbReference type="FunFam" id="2.30.33.40:FF:000001">
    <property type="entry name" value="10 kDa chaperonin"/>
    <property type="match status" value="1"/>
</dbReference>
<dbReference type="Gene3D" id="2.30.33.40">
    <property type="entry name" value="GroES chaperonin"/>
    <property type="match status" value="1"/>
</dbReference>
<dbReference type="HAMAP" id="MF_00580">
    <property type="entry name" value="CH10"/>
    <property type="match status" value="1"/>
</dbReference>
<dbReference type="InterPro" id="IPR020818">
    <property type="entry name" value="Chaperonin_GroES"/>
</dbReference>
<dbReference type="InterPro" id="IPR037124">
    <property type="entry name" value="Chaperonin_GroES_sf"/>
</dbReference>
<dbReference type="InterPro" id="IPR018369">
    <property type="entry name" value="Chaprnonin_Cpn10_CS"/>
</dbReference>
<dbReference type="InterPro" id="IPR011032">
    <property type="entry name" value="GroES-like_sf"/>
</dbReference>
<dbReference type="NCBIfam" id="NF001527">
    <property type="entry name" value="PRK00364.1-2"/>
    <property type="match status" value="1"/>
</dbReference>
<dbReference type="NCBIfam" id="NF001529">
    <property type="entry name" value="PRK00364.1-5"/>
    <property type="match status" value="1"/>
</dbReference>
<dbReference type="NCBIfam" id="NF001531">
    <property type="entry name" value="PRK00364.2-2"/>
    <property type="match status" value="1"/>
</dbReference>
<dbReference type="NCBIfam" id="NF001533">
    <property type="entry name" value="PRK00364.2-4"/>
    <property type="match status" value="1"/>
</dbReference>
<dbReference type="PANTHER" id="PTHR10772">
    <property type="entry name" value="10 KDA HEAT SHOCK PROTEIN"/>
    <property type="match status" value="1"/>
</dbReference>
<dbReference type="PANTHER" id="PTHR10772:SF58">
    <property type="entry name" value="CO-CHAPERONIN GROES"/>
    <property type="match status" value="1"/>
</dbReference>
<dbReference type="Pfam" id="PF00166">
    <property type="entry name" value="Cpn10"/>
    <property type="match status" value="1"/>
</dbReference>
<dbReference type="PRINTS" id="PR00297">
    <property type="entry name" value="CHAPERONIN10"/>
</dbReference>
<dbReference type="SMART" id="SM00883">
    <property type="entry name" value="Cpn10"/>
    <property type="match status" value="1"/>
</dbReference>
<dbReference type="SUPFAM" id="SSF50129">
    <property type="entry name" value="GroES-like"/>
    <property type="match status" value="1"/>
</dbReference>
<dbReference type="PROSITE" id="PS00681">
    <property type="entry name" value="CHAPERONINS_CPN10"/>
    <property type="match status" value="1"/>
</dbReference>
<sequence>MAFKPLHDRVLVRRVQSDEKTKGGLIIPDTAKEKPAEGEVVSCGEGARKDSGELIAMSVKAGDRVLFGKWSGTEVTIDGAELLIMKESDILGILS</sequence>
<feature type="initiator methionine" description="Removed" evidence="2">
    <location>
        <position position="1"/>
    </location>
</feature>
<feature type="chain" id="PRO_0000174828" description="Co-chaperonin GroES">
    <location>
        <begin position="2"/>
        <end position="95"/>
    </location>
</feature>